<comment type="function">
    <text evidence="1">The heterodimer acts as both an ATP-dependent DNA helicase and an ATP-dependent, dual-direction single-stranded exonuclease. Recognizes the chi site generating a DNA molecule suitable for the initiation of homologous recombination. The AddA nuclease domain is required for chi fragment generation; this subunit has the helicase and 3' -&gt; 5' nuclease activities.</text>
</comment>
<comment type="catalytic activity">
    <reaction evidence="1">
        <text>Couples ATP hydrolysis with the unwinding of duplex DNA by translocating in the 3'-5' direction.</text>
        <dbReference type="EC" id="5.6.2.4"/>
    </reaction>
</comment>
<comment type="catalytic activity">
    <reaction evidence="1">
        <text>ATP + H2O = ADP + phosphate + H(+)</text>
        <dbReference type="Rhea" id="RHEA:13065"/>
        <dbReference type="ChEBI" id="CHEBI:15377"/>
        <dbReference type="ChEBI" id="CHEBI:15378"/>
        <dbReference type="ChEBI" id="CHEBI:30616"/>
        <dbReference type="ChEBI" id="CHEBI:43474"/>
        <dbReference type="ChEBI" id="CHEBI:456216"/>
        <dbReference type="EC" id="5.6.2.4"/>
    </reaction>
</comment>
<comment type="cofactor">
    <cofactor evidence="1">
        <name>Mg(2+)</name>
        <dbReference type="ChEBI" id="CHEBI:18420"/>
    </cofactor>
</comment>
<comment type="subunit">
    <text evidence="1">Heterodimer of AddA and AddB/RexB.</text>
</comment>
<comment type="similarity">
    <text evidence="1">Belongs to the helicase family. AddA subfamily.</text>
</comment>
<keyword id="KW-0067">ATP-binding</keyword>
<keyword id="KW-0227">DNA damage</keyword>
<keyword id="KW-0234">DNA repair</keyword>
<keyword id="KW-0238">DNA-binding</keyword>
<keyword id="KW-0269">Exonuclease</keyword>
<keyword id="KW-0347">Helicase</keyword>
<keyword id="KW-0378">Hydrolase</keyword>
<keyword id="KW-0413">Isomerase</keyword>
<keyword id="KW-0540">Nuclease</keyword>
<keyword id="KW-0547">Nucleotide-binding</keyword>
<keyword id="KW-1185">Reference proteome</keyword>
<reference key="1">
    <citation type="journal article" date="2001" name="J. Bacteriol.">
        <title>Genome of the bacterium Streptococcus pneumoniae strain R6.</title>
        <authorList>
            <person name="Hoskins J."/>
            <person name="Alborn W.E. Jr."/>
            <person name="Arnold J."/>
            <person name="Blaszczak L.C."/>
            <person name="Burgett S."/>
            <person name="DeHoff B.S."/>
            <person name="Estrem S.T."/>
            <person name="Fritz L."/>
            <person name="Fu D.-J."/>
            <person name="Fuller W."/>
            <person name="Geringer C."/>
            <person name="Gilmour R."/>
            <person name="Glass J.S."/>
            <person name="Khoja H."/>
            <person name="Kraft A.R."/>
            <person name="Lagace R.E."/>
            <person name="LeBlanc D.J."/>
            <person name="Lee L.N."/>
            <person name="Lefkowitz E.J."/>
            <person name="Lu J."/>
            <person name="Matsushima P."/>
            <person name="McAhren S.M."/>
            <person name="McHenney M."/>
            <person name="McLeaster K."/>
            <person name="Mundy C.W."/>
            <person name="Nicas T.I."/>
            <person name="Norris F.H."/>
            <person name="O'Gara M."/>
            <person name="Peery R.B."/>
            <person name="Robertson G.T."/>
            <person name="Rockey P."/>
            <person name="Sun P.-M."/>
            <person name="Winkler M.E."/>
            <person name="Yang Y."/>
            <person name="Young-Bellido M."/>
            <person name="Zhao G."/>
            <person name="Zook C.A."/>
            <person name="Baltz R.H."/>
            <person name="Jaskunas S.R."/>
            <person name="Rosteck P.R. Jr."/>
            <person name="Skatrud P.L."/>
            <person name="Glass J.I."/>
        </authorList>
    </citation>
    <scope>NUCLEOTIDE SEQUENCE [LARGE SCALE GENOMIC DNA]</scope>
    <source>
        <strain>ATCC BAA-255 / R6</strain>
    </source>
</reference>
<feature type="chain" id="PRO_0000379335" description="ATP-dependent helicase/nuclease subunit A">
    <location>
        <begin position="1"/>
        <end position="1216"/>
    </location>
</feature>
<feature type="domain" description="UvrD-like helicase ATP-binding" evidence="1">
    <location>
        <begin position="26"/>
        <end position="488"/>
    </location>
</feature>
<feature type="domain" description="UvrD-like helicase C-terminal" evidence="1">
    <location>
        <begin position="515"/>
        <end position="802"/>
    </location>
</feature>
<feature type="binding site" evidence="1">
    <location>
        <begin position="47"/>
        <end position="54"/>
    </location>
    <ligand>
        <name>ATP</name>
        <dbReference type="ChEBI" id="CHEBI:30616"/>
    </ligand>
</feature>
<dbReference type="EC" id="3.1.-.-" evidence="1"/>
<dbReference type="EC" id="5.6.2.4" evidence="1"/>
<dbReference type="EMBL" id="AE007317">
    <property type="protein sequence ID" value="AAK99844.1"/>
    <property type="molecule type" value="Genomic_DNA"/>
</dbReference>
<dbReference type="PIR" id="D95133">
    <property type="entry name" value="D95133"/>
</dbReference>
<dbReference type="PIR" id="H98001">
    <property type="entry name" value="H98001"/>
</dbReference>
<dbReference type="RefSeq" id="NP_358634.1">
    <property type="nucleotide sequence ID" value="NC_003098.1"/>
</dbReference>
<dbReference type="RefSeq" id="WP_000767212.1">
    <property type="nucleotide sequence ID" value="NC_003098.1"/>
</dbReference>
<dbReference type="SMR" id="Q8DPR6"/>
<dbReference type="STRING" id="171101.spr1040"/>
<dbReference type="KEGG" id="spr:spr1040"/>
<dbReference type="PATRIC" id="fig|171101.6.peg.1129"/>
<dbReference type="eggNOG" id="COG1074">
    <property type="taxonomic scope" value="Bacteria"/>
</dbReference>
<dbReference type="HOGENOM" id="CLU_001114_3_1_9"/>
<dbReference type="Proteomes" id="UP000000586">
    <property type="component" value="Chromosome"/>
</dbReference>
<dbReference type="GO" id="GO:0005829">
    <property type="term" value="C:cytosol"/>
    <property type="evidence" value="ECO:0000318"/>
    <property type="project" value="GO_Central"/>
</dbReference>
<dbReference type="GO" id="GO:0033202">
    <property type="term" value="C:DNA helicase complex"/>
    <property type="evidence" value="ECO:0000318"/>
    <property type="project" value="GO_Central"/>
</dbReference>
<dbReference type="GO" id="GO:0043138">
    <property type="term" value="F:3'-5' DNA helicase activity"/>
    <property type="evidence" value="ECO:0000318"/>
    <property type="project" value="GO_Central"/>
</dbReference>
<dbReference type="GO" id="GO:0008408">
    <property type="term" value="F:3'-5' exonuclease activity"/>
    <property type="evidence" value="ECO:0007669"/>
    <property type="project" value="UniProtKB-UniRule"/>
</dbReference>
<dbReference type="GO" id="GO:0005524">
    <property type="term" value="F:ATP binding"/>
    <property type="evidence" value="ECO:0007669"/>
    <property type="project" value="UniProtKB-UniRule"/>
</dbReference>
<dbReference type="GO" id="GO:0016887">
    <property type="term" value="F:ATP hydrolysis activity"/>
    <property type="evidence" value="ECO:0007669"/>
    <property type="project" value="RHEA"/>
</dbReference>
<dbReference type="GO" id="GO:0003690">
    <property type="term" value="F:double-stranded DNA binding"/>
    <property type="evidence" value="ECO:0007669"/>
    <property type="project" value="UniProtKB-UniRule"/>
</dbReference>
<dbReference type="GO" id="GO:0000724">
    <property type="term" value="P:double-strand break repair via homologous recombination"/>
    <property type="evidence" value="ECO:0007669"/>
    <property type="project" value="UniProtKB-UniRule"/>
</dbReference>
<dbReference type="GO" id="GO:0000725">
    <property type="term" value="P:recombinational repair"/>
    <property type="evidence" value="ECO:0000318"/>
    <property type="project" value="GO_Central"/>
</dbReference>
<dbReference type="CDD" id="cd17932">
    <property type="entry name" value="DEXQc_UvrD"/>
    <property type="match status" value="1"/>
</dbReference>
<dbReference type="FunFam" id="3.40.50.300:FF:001196">
    <property type="entry name" value="ATP-dependent helicase/nuclease subunit A"/>
    <property type="match status" value="1"/>
</dbReference>
<dbReference type="FunFam" id="3.40.50.300:FF:002351">
    <property type="entry name" value="ATP-dependent helicase/nuclease subunit A"/>
    <property type="match status" value="1"/>
</dbReference>
<dbReference type="FunFam" id="3.40.50.300:FF:002570">
    <property type="entry name" value="ATP-dependent helicase/nuclease subunit A"/>
    <property type="match status" value="1"/>
</dbReference>
<dbReference type="Gene3D" id="3.90.320.10">
    <property type="match status" value="1"/>
</dbReference>
<dbReference type="Gene3D" id="3.40.50.300">
    <property type="entry name" value="P-loop containing nucleotide triphosphate hydrolases"/>
    <property type="match status" value="4"/>
</dbReference>
<dbReference type="Gene3D" id="1.10.486.10">
    <property type="entry name" value="PCRA, domain 4"/>
    <property type="match status" value="1"/>
</dbReference>
<dbReference type="HAMAP" id="MF_01451">
    <property type="entry name" value="AddA"/>
    <property type="match status" value="1"/>
</dbReference>
<dbReference type="InterPro" id="IPR014152">
    <property type="entry name" value="AddA"/>
</dbReference>
<dbReference type="InterPro" id="IPR014017">
    <property type="entry name" value="DNA_helicase_UvrD-like_C"/>
</dbReference>
<dbReference type="InterPro" id="IPR000212">
    <property type="entry name" value="DNA_helicase_UvrD/REP"/>
</dbReference>
<dbReference type="InterPro" id="IPR027417">
    <property type="entry name" value="P-loop_NTPase"/>
</dbReference>
<dbReference type="InterPro" id="IPR011604">
    <property type="entry name" value="PDDEXK-like_dom_sf"/>
</dbReference>
<dbReference type="InterPro" id="IPR038726">
    <property type="entry name" value="PDDEXK_AddAB-type"/>
</dbReference>
<dbReference type="InterPro" id="IPR011335">
    <property type="entry name" value="Restrct_endonuc-II-like"/>
</dbReference>
<dbReference type="InterPro" id="IPR014016">
    <property type="entry name" value="UvrD-like_ATP-bd"/>
</dbReference>
<dbReference type="NCBIfam" id="TIGR02785">
    <property type="entry name" value="addA_Gpos"/>
    <property type="match status" value="1"/>
</dbReference>
<dbReference type="PANTHER" id="PTHR11070:SF48">
    <property type="entry name" value="ATP-DEPENDENT HELICASE_NUCLEASE SUBUNIT A"/>
    <property type="match status" value="1"/>
</dbReference>
<dbReference type="PANTHER" id="PTHR11070">
    <property type="entry name" value="UVRD / RECB / PCRA DNA HELICASE FAMILY MEMBER"/>
    <property type="match status" value="1"/>
</dbReference>
<dbReference type="Pfam" id="PF12705">
    <property type="entry name" value="PDDEXK_1"/>
    <property type="match status" value="1"/>
</dbReference>
<dbReference type="Pfam" id="PF00580">
    <property type="entry name" value="UvrD-helicase"/>
    <property type="match status" value="1"/>
</dbReference>
<dbReference type="Pfam" id="PF13361">
    <property type="entry name" value="UvrD_C"/>
    <property type="match status" value="1"/>
</dbReference>
<dbReference type="SUPFAM" id="SSF52540">
    <property type="entry name" value="P-loop containing nucleoside triphosphate hydrolases"/>
    <property type="match status" value="1"/>
</dbReference>
<dbReference type="SUPFAM" id="SSF52980">
    <property type="entry name" value="Restriction endonuclease-like"/>
    <property type="match status" value="1"/>
</dbReference>
<dbReference type="PROSITE" id="PS51198">
    <property type="entry name" value="UVRD_HELICASE_ATP_BIND"/>
    <property type="match status" value="1"/>
</dbReference>
<dbReference type="PROSITE" id="PS51217">
    <property type="entry name" value="UVRD_HELICASE_CTER"/>
    <property type="match status" value="1"/>
</dbReference>
<gene>
    <name evidence="1" type="primary">addA</name>
    <name type="synonym">rexA</name>
    <name type="ordered locus">spr1040</name>
</gene>
<accession>Q8DPR6</accession>
<sequence length="1216" mass="140167">MKLIPFLSEEEIQKLQEAEANSSKEQKKTAEQIEAIYTSAQNILVSASAGSGKTFVMAERILDQLARGVEISQLFISTFTVKAATELKERLEKKISKKIQETDDVDLKQHLGRQLADLPNAAIGTMDSFTQKFLGKHGYLLDIAPNFRILQNQSEQLILENEVFHEVFEAHYQGKQKETFSHLLKNFAGRGKDERGLRQQVYKIYDFLQSTSNPQKWLSESFLKGFEKADFTSEKEKLTEQIKQALWDLESFFRYHLDNDAKEFAKAAYLENVQLILDEIGSLNQESDSQAYQAVLARVVAISKEKNGRALTNASRKADLKPLADAYNEERKTQFAKLGQLSDQIAILDYQERYHGDTWKLAKTFQSFMSDFVEAYRQRKRQENAFEFADISHYTIEILENFPQVRESYQERFHEVMVDEYQDTNHIQERMLELLSNGHNRFMVGDIKQSIYRFRQADPQIFNEKFQRYAQNPQEGRLIILKENFRSSSEVLSATNDVFERLMDQEVGEINYDNKHQLVFANTKLTPNPDNKAAFLLYDKDDTGEEEESQTETKLTGEMRLVIKEILKLHQEKGVAFKEIALLTSSRSRNDQILLALSEYGIPVKTDGEQNNYLQSLEVQVMLDTLRVIHNPLQDYALVALMKSPMFGFDEDELARLSLQKAEDKVHENLYEKLVNAQKMASSQKGLIHTALAEKLKQFMDILASWRLYAKTHSLYDLIWKIYNDRFYYDYVGALPNGPARQANLYALALRADQFEKSNFKGLSRFIRMIDQVLEAQHDLASVAVAPPKDAVELMTIHKSKGLEFPYVFILNMDQDFNKQDSMSEVILSRQNGLGVKYIAKMETGAVEDHYPKTIKLSIPSLTYRQNEEELQLASYSEQMRLLYVAMTRAEKKLYLVGKGSREKLESKEYPAAKNGKLNSNTRLQARNFQDWLWAISKVFTKDKLNFSYRFIGEDQLTREAIGELETKSPLQDSSQADNRQSDTIKEALEMLKEVEVYNTLHRAAIELPSVQTPSQIKKFYEPVMDMEGVEIAGQGQSVGKKISFDLPDFSTKEKVTGAEIGSATHELMQRIDLSQQLTLASLTETLKQVQTSQAVRDKINLDKILAFFDTVLGQEILANTDHLYREQPFSMLKRDQKSQEDFVVRGILDGYLLYENKIVLFDYKTDRYDEPSQLVDRYRGQLALYEEALSRAYSIENIEKYLILLGKDEVQVVKV</sequence>
<protein>
    <recommendedName>
        <fullName evidence="1">ATP-dependent helicase/nuclease subunit A</fullName>
        <ecNumber evidence="1">3.1.-.-</ecNumber>
        <ecNumber evidence="1">5.6.2.4</ecNumber>
    </recommendedName>
    <alternativeName>
        <fullName evidence="1">ATP-dependent helicase/nuclease AddA</fullName>
    </alternativeName>
    <alternativeName>
        <fullName evidence="1">DNA 3'-5' helicase AddA</fullName>
    </alternativeName>
</protein>
<name>ADDA_STRR6</name>
<evidence type="ECO:0000255" key="1">
    <source>
        <dbReference type="HAMAP-Rule" id="MF_01451"/>
    </source>
</evidence>
<proteinExistence type="inferred from homology"/>
<organism>
    <name type="scientific">Streptococcus pneumoniae (strain ATCC BAA-255 / R6)</name>
    <dbReference type="NCBI Taxonomy" id="171101"/>
    <lineage>
        <taxon>Bacteria</taxon>
        <taxon>Bacillati</taxon>
        <taxon>Bacillota</taxon>
        <taxon>Bacilli</taxon>
        <taxon>Lactobacillales</taxon>
        <taxon>Streptococcaceae</taxon>
        <taxon>Streptococcus</taxon>
    </lineage>
</organism>